<organism>
    <name type="scientific">Xanthomonas campestris pv. campestris (strain 8004)</name>
    <dbReference type="NCBI Taxonomy" id="314565"/>
    <lineage>
        <taxon>Bacteria</taxon>
        <taxon>Pseudomonadati</taxon>
        <taxon>Pseudomonadota</taxon>
        <taxon>Gammaproteobacteria</taxon>
        <taxon>Lysobacterales</taxon>
        <taxon>Lysobacteraceae</taxon>
        <taxon>Xanthomonas</taxon>
    </lineage>
</organism>
<reference key="1">
    <citation type="journal article" date="2005" name="Genome Res.">
        <title>Comparative and functional genomic analyses of the pathogenicity of phytopathogen Xanthomonas campestris pv. campestris.</title>
        <authorList>
            <person name="Qian W."/>
            <person name="Jia Y."/>
            <person name="Ren S.-X."/>
            <person name="He Y.-Q."/>
            <person name="Feng J.-X."/>
            <person name="Lu L.-F."/>
            <person name="Sun Q."/>
            <person name="Ying G."/>
            <person name="Tang D.-J."/>
            <person name="Tang H."/>
            <person name="Wu W."/>
            <person name="Hao P."/>
            <person name="Wang L."/>
            <person name="Jiang B.-L."/>
            <person name="Zeng S."/>
            <person name="Gu W.-Y."/>
            <person name="Lu G."/>
            <person name="Rong L."/>
            <person name="Tian Y."/>
            <person name="Yao Z."/>
            <person name="Fu G."/>
            <person name="Chen B."/>
            <person name="Fang R."/>
            <person name="Qiang B."/>
            <person name="Chen Z."/>
            <person name="Zhao G.-P."/>
            <person name="Tang J.-L."/>
            <person name="He C."/>
        </authorList>
    </citation>
    <scope>NUCLEOTIDE SEQUENCE [LARGE SCALE GENOMIC DNA]</scope>
    <source>
        <strain>8004</strain>
    </source>
</reference>
<keyword id="KW-0067">ATP-binding</keyword>
<keyword id="KW-0963">Cytoplasm</keyword>
<keyword id="KW-0418">Kinase</keyword>
<keyword id="KW-0547">Nucleotide-binding</keyword>
<keyword id="KW-0808">Transferase</keyword>
<feature type="chain" id="PRO_1000048313" description="Cytidylate kinase">
    <location>
        <begin position="1"/>
        <end position="226"/>
    </location>
</feature>
<feature type="binding site" evidence="1">
    <location>
        <begin position="12"/>
        <end position="20"/>
    </location>
    <ligand>
        <name>ATP</name>
        <dbReference type="ChEBI" id="CHEBI:30616"/>
    </ligand>
</feature>
<dbReference type="EC" id="2.7.4.25" evidence="1"/>
<dbReference type="EMBL" id="CP000050">
    <property type="protein sequence ID" value="AAY48986.1"/>
    <property type="molecule type" value="Genomic_DNA"/>
</dbReference>
<dbReference type="RefSeq" id="WP_011037341.1">
    <property type="nucleotide sequence ID" value="NZ_CP155948.1"/>
</dbReference>
<dbReference type="SMR" id="Q4UVD7"/>
<dbReference type="KEGG" id="xcb:XC_1923"/>
<dbReference type="HOGENOM" id="CLU_079959_2_0_6"/>
<dbReference type="Proteomes" id="UP000000420">
    <property type="component" value="Chromosome"/>
</dbReference>
<dbReference type="GO" id="GO:0005737">
    <property type="term" value="C:cytoplasm"/>
    <property type="evidence" value="ECO:0007669"/>
    <property type="project" value="UniProtKB-SubCell"/>
</dbReference>
<dbReference type="GO" id="GO:0005524">
    <property type="term" value="F:ATP binding"/>
    <property type="evidence" value="ECO:0007669"/>
    <property type="project" value="UniProtKB-UniRule"/>
</dbReference>
<dbReference type="GO" id="GO:0036430">
    <property type="term" value="F:CMP kinase activity"/>
    <property type="evidence" value="ECO:0007669"/>
    <property type="project" value="RHEA"/>
</dbReference>
<dbReference type="GO" id="GO:0036431">
    <property type="term" value="F:dCMP kinase activity"/>
    <property type="evidence" value="ECO:0007669"/>
    <property type="project" value="RHEA"/>
</dbReference>
<dbReference type="GO" id="GO:0006220">
    <property type="term" value="P:pyrimidine nucleotide metabolic process"/>
    <property type="evidence" value="ECO:0007669"/>
    <property type="project" value="UniProtKB-UniRule"/>
</dbReference>
<dbReference type="CDD" id="cd02020">
    <property type="entry name" value="CMPK"/>
    <property type="match status" value="1"/>
</dbReference>
<dbReference type="FunFam" id="3.40.50.300:FF:000262">
    <property type="entry name" value="Cytidylate kinase"/>
    <property type="match status" value="1"/>
</dbReference>
<dbReference type="Gene3D" id="3.40.50.300">
    <property type="entry name" value="P-loop containing nucleotide triphosphate hydrolases"/>
    <property type="match status" value="1"/>
</dbReference>
<dbReference type="HAMAP" id="MF_00238">
    <property type="entry name" value="Cytidyl_kinase_type1"/>
    <property type="match status" value="1"/>
</dbReference>
<dbReference type="InterPro" id="IPR003136">
    <property type="entry name" value="Cytidylate_kin"/>
</dbReference>
<dbReference type="InterPro" id="IPR011994">
    <property type="entry name" value="Cytidylate_kinase_dom"/>
</dbReference>
<dbReference type="InterPro" id="IPR027417">
    <property type="entry name" value="P-loop_NTPase"/>
</dbReference>
<dbReference type="NCBIfam" id="TIGR00017">
    <property type="entry name" value="cmk"/>
    <property type="match status" value="1"/>
</dbReference>
<dbReference type="Pfam" id="PF02224">
    <property type="entry name" value="Cytidylate_kin"/>
    <property type="match status" value="1"/>
</dbReference>
<dbReference type="SUPFAM" id="SSF52540">
    <property type="entry name" value="P-loop containing nucleoside triphosphate hydrolases"/>
    <property type="match status" value="1"/>
</dbReference>
<comment type="catalytic activity">
    <reaction evidence="1">
        <text>CMP + ATP = CDP + ADP</text>
        <dbReference type="Rhea" id="RHEA:11600"/>
        <dbReference type="ChEBI" id="CHEBI:30616"/>
        <dbReference type="ChEBI" id="CHEBI:58069"/>
        <dbReference type="ChEBI" id="CHEBI:60377"/>
        <dbReference type="ChEBI" id="CHEBI:456216"/>
        <dbReference type="EC" id="2.7.4.25"/>
    </reaction>
</comment>
<comment type="catalytic activity">
    <reaction evidence="1">
        <text>dCMP + ATP = dCDP + ADP</text>
        <dbReference type="Rhea" id="RHEA:25094"/>
        <dbReference type="ChEBI" id="CHEBI:30616"/>
        <dbReference type="ChEBI" id="CHEBI:57566"/>
        <dbReference type="ChEBI" id="CHEBI:58593"/>
        <dbReference type="ChEBI" id="CHEBI:456216"/>
        <dbReference type="EC" id="2.7.4.25"/>
    </reaction>
</comment>
<comment type="subcellular location">
    <subcellularLocation>
        <location evidence="1">Cytoplasm</location>
    </subcellularLocation>
</comment>
<comment type="similarity">
    <text evidence="1">Belongs to the cytidylate kinase family. Type 1 subfamily.</text>
</comment>
<evidence type="ECO:0000255" key="1">
    <source>
        <dbReference type="HAMAP-Rule" id="MF_00238"/>
    </source>
</evidence>
<sequence length="226" mass="24078">MTDLSPVLTIDGPSGAGKGTVSRIVAARLGWHYLDSGALYRAVGVAASWADLDVSDPAALVRCAFDTKVEFDEAGEAGLRVLVNGVDATSELRLETTGALASAIAAIPEVRSALKERQRAFRQPPGLVADGRDMGTVIFPDAAFKVFLTASAEERAGRRHKQLMEKGVSVIFDDLLREIMARDARDAQRVVAPLRPAEDAVLIDTSGIGIEDVVQRVVGLLDSRTP</sequence>
<gene>
    <name evidence="1" type="primary">cmk</name>
    <name type="ordered locus">XC_1923</name>
</gene>
<protein>
    <recommendedName>
        <fullName evidence="1">Cytidylate kinase</fullName>
        <shortName evidence="1">CK</shortName>
        <ecNumber evidence="1">2.7.4.25</ecNumber>
    </recommendedName>
    <alternativeName>
        <fullName evidence="1">Cytidine monophosphate kinase</fullName>
        <shortName evidence="1">CMP kinase</shortName>
    </alternativeName>
</protein>
<proteinExistence type="inferred from homology"/>
<accession>Q4UVD7</accession>
<name>KCY_XANC8</name>